<feature type="chain" id="PRO_1000092645" description="Ribosomal RNA small subunit methyltransferase G">
    <location>
        <begin position="1"/>
        <end position="216"/>
    </location>
</feature>
<feature type="binding site" evidence="1">
    <location>
        <position position="81"/>
    </location>
    <ligand>
        <name>S-adenosyl-L-methionine</name>
        <dbReference type="ChEBI" id="CHEBI:59789"/>
    </ligand>
</feature>
<feature type="binding site" evidence="1">
    <location>
        <position position="86"/>
    </location>
    <ligand>
        <name>S-adenosyl-L-methionine</name>
        <dbReference type="ChEBI" id="CHEBI:59789"/>
    </ligand>
</feature>
<feature type="binding site" evidence="1">
    <location>
        <begin position="130"/>
        <end position="131"/>
    </location>
    <ligand>
        <name>S-adenosyl-L-methionine</name>
        <dbReference type="ChEBI" id="CHEBI:59789"/>
    </ligand>
</feature>
<feature type="binding site" evidence="1">
    <location>
        <position position="144"/>
    </location>
    <ligand>
        <name>S-adenosyl-L-methionine</name>
        <dbReference type="ChEBI" id="CHEBI:59789"/>
    </ligand>
</feature>
<reference key="1">
    <citation type="submission" date="2007-03" db="EMBL/GenBank/DDBJ databases">
        <title>Genome sequence of Rhodospirillum centenum.</title>
        <authorList>
            <person name="Touchman J.W."/>
            <person name="Bauer C."/>
            <person name="Blankenship R.E."/>
        </authorList>
    </citation>
    <scope>NUCLEOTIDE SEQUENCE [LARGE SCALE GENOMIC DNA]</scope>
    <source>
        <strain>ATCC 51521 / SW</strain>
    </source>
</reference>
<dbReference type="EC" id="2.1.1.170" evidence="1"/>
<dbReference type="EMBL" id="CP000613">
    <property type="protein sequence ID" value="ACJ00183.1"/>
    <property type="molecule type" value="Genomic_DNA"/>
</dbReference>
<dbReference type="RefSeq" id="WP_012567963.1">
    <property type="nucleotide sequence ID" value="NC_011420.2"/>
</dbReference>
<dbReference type="SMR" id="B6IV59"/>
<dbReference type="STRING" id="414684.RC1_2811"/>
<dbReference type="KEGG" id="rce:RC1_2811"/>
<dbReference type="eggNOG" id="COG0357">
    <property type="taxonomic scope" value="Bacteria"/>
</dbReference>
<dbReference type="HOGENOM" id="CLU_065341_1_1_5"/>
<dbReference type="OrthoDB" id="9808773at2"/>
<dbReference type="Proteomes" id="UP000001591">
    <property type="component" value="Chromosome"/>
</dbReference>
<dbReference type="GO" id="GO:0005829">
    <property type="term" value="C:cytosol"/>
    <property type="evidence" value="ECO:0007669"/>
    <property type="project" value="TreeGrafter"/>
</dbReference>
<dbReference type="GO" id="GO:0070043">
    <property type="term" value="F:rRNA (guanine-N7-)-methyltransferase activity"/>
    <property type="evidence" value="ECO:0007669"/>
    <property type="project" value="UniProtKB-UniRule"/>
</dbReference>
<dbReference type="CDD" id="cd02440">
    <property type="entry name" value="AdoMet_MTases"/>
    <property type="match status" value="1"/>
</dbReference>
<dbReference type="Gene3D" id="3.40.50.150">
    <property type="entry name" value="Vaccinia Virus protein VP39"/>
    <property type="match status" value="1"/>
</dbReference>
<dbReference type="HAMAP" id="MF_00074">
    <property type="entry name" value="16SrRNA_methyltr_G"/>
    <property type="match status" value="1"/>
</dbReference>
<dbReference type="InterPro" id="IPR003682">
    <property type="entry name" value="rRNA_ssu_MeTfrase_G"/>
</dbReference>
<dbReference type="InterPro" id="IPR029063">
    <property type="entry name" value="SAM-dependent_MTases_sf"/>
</dbReference>
<dbReference type="NCBIfam" id="TIGR00138">
    <property type="entry name" value="rsmG_gidB"/>
    <property type="match status" value="1"/>
</dbReference>
<dbReference type="PANTHER" id="PTHR31760">
    <property type="entry name" value="S-ADENOSYL-L-METHIONINE-DEPENDENT METHYLTRANSFERASES SUPERFAMILY PROTEIN"/>
    <property type="match status" value="1"/>
</dbReference>
<dbReference type="PANTHER" id="PTHR31760:SF0">
    <property type="entry name" value="S-ADENOSYL-L-METHIONINE-DEPENDENT METHYLTRANSFERASES SUPERFAMILY PROTEIN"/>
    <property type="match status" value="1"/>
</dbReference>
<dbReference type="Pfam" id="PF02527">
    <property type="entry name" value="GidB"/>
    <property type="match status" value="1"/>
</dbReference>
<dbReference type="SUPFAM" id="SSF53335">
    <property type="entry name" value="S-adenosyl-L-methionine-dependent methyltransferases"/>
    <property type="match status" value="1"/>
</dbReference>
<gene>
    <name evidence="1" type="primary">rsmG</name>
    <name type="ordered locus">RC1_2811</name>
</gene>
<accession>B6IV59</accession>
<comment type="function">
    <text evidence="1">Specifically methylates the N7 position of guanine in position 527 of 16S rRNA.</text>
</comment>
<comment type="catalytic activity">
    <reaction evidence="1">
        <text>guanosine(527) in 16S rRNA + S-adenosyl-L-methionine = N(7)-methylguanosine(527) in 16S rRNA + S-adenosyl-L-homocysteine</text>
        <dbReference type="Rhea" id="RHEA:42732"/>
        <dbReference type="Rhea" id="RHEA-COMP:10209"/>
        <dbReference type="Rhea" id="RHEA-COMP:10210"/>
        <dbReference type="ChEBI" id="CHEBI:57856"/>
        <dbReference type="ChEBI" id="CHEBI:59789"/>
        <dbReference type="ChEBI" id="CHEBI:74269"/>
        <dbReference type="ChEBI" id="CHEBI:74480"/>
        <dbReference type="EC" id="2.1.1.170"/>
    </reaction>
</comment>
<comment type="subcellular location">
    <subcellularLocation>
        <location evidence="1">Cytoplasm</location>
    </subcellularLocation>
</comment>
<comment type="similarity">
    <text evidence="1">Belongs to the methyltransferase superfamily. RNA methyltransferase RsmG family.</text>
</comment>
<protein>
    <recommendedName>
        <fullName evidence="1">Ribosomal RNA small subunit methyltransferase G</fullName>
        <ecNumber evidence="1">2.1.1.170</ecNumber>
    </recommendedName>
    <alternativeName>
        <fullName evidence="1">16S rRNA 7-methylguanosine methyltransferase</fullName>
        <shortName evidence="1">16S rRNA m7G methyltransferase</shortName>
    </alternativeName>
</protein>
<name>RSMG_RHOCS</name>
<sequence>MSNTRLPAPSFRATDFQAAFGVSRETLDRLAAYEALLRKWNPAINLVARSTLDDVWERHFADSAQLFALLPEGTRVLVDLGSGAGFPGLVLAILGVPEVHLIESDGRKAAFLREVARVTGAPATVHAQRAEQAEAPPADAVSARALADLSALLPLAARFLRPGGICLFPKGRTAADELTRARDSWTMRVEEFPSRTDPSGALLRLSEIAPRGMQIG</sequence>
<proteinExistence type="inferred from homology"/>
<evidence type="ECO:0000255" key="1">
    <source>
        <dbReference type="HAMAP-Rule" id="MF_00074"/>
    </source>
</evidence>
<organism>
    <name type="scientific">Rhodospirillum centenum (strain ATCC 51521 / SW)</name>
    <dbReference type="NCBI Taxonomy" id="414684"/>
    <lineage>
        <taxon>Bacteria</taxon>
        <taxon>Pseudomonadati</taxon>
        <taxon>Pseudomonadota</taxon>
        <taxon>Alphaproteobacteria</taxon>
        <taxon>Rhodospirillales</taxon>
        <taxon>Rhodospirillaceae</taxon>
        <taxon>Rhodospirillum</taxon>
    </lineage>
</organism>
<keyword id="KW-0963">Cytoplasm</keyword>
<keyword id="KW-0489">Methyltransferase</keyword>
<keyword id="KW-1185">Reference proteome</keyword>
<keyword id="KW-0698">rRNA processing</keyword>
<keyword id="KW-0949">S-adenosyl-L-methionine</keyword>
<keyword id="KW-0808">Transferase</keyword>